<dbReference type="EC" id="3.1.3.16"/>
<dbReference type="EC" id="3.1.3.48"/>
<dbReference type="EMBL" id="AY233266">
    <property type="protein sequence ID" value="AAP57715.1"/>
    <property type="molecule type" value="mRNA"/>
</dbReference>
<dbReference type="EMBL" id="AY618876">
    <property type="protein sequence ID" value="AAT39429.1"/>
    <property type="molecule type" value="mRNA"/>
</dbReference>
<dbReference type="EMBL" id="BC080117">
    <property type="protein sequence ID" value="AAH80117.2"/>
    <property type="molecule type" value="mRNA"/>
</dbReference>
<dbReference type="EMBL" id="BC094472">
    <property type="protein sequence ID" value="AAH94472.1"/>
    <property type="molecule type" value="mRNA"/>
</dbReference>
<dbReference type="RefSeq" id="NP_001082641.1">
    <property type="nucleotide sequence ID" value="NM_001089172.1"/>
</dbReference>
<dbReference type="SMR" id="Q6IVY4"/>
<dbReference type="GeneID" id="398618"/>
<dbReference type="KEGG" id="xla:398618"/>
<dbReference type="AGR" id="Xenbase:XB-GENE-5816852"/>
<dbReference type="CTD" id="398618"/>
<dbReference type="Xenbase" id="XB-GENE-5816852">
    <property type="gene designation" value="ssh3.L"/>
</dbReference>
<dbReference type="OMA" id="QYWKETH"/>
<dbReference type="OrthoDB" id="5779068at2759"/>
<dbReference type="Proteomes" id="UP000186698">
    <property type="component" value="Chromosome 7L"/>
</dbReference>
<dbReference type="Bgee" id="398618">
    <property type="expression patterns" value="Expressed in egg cell and 19 other cell types or tissues"/>
</dbReference>
<dbReference type="GO" id="GO:0032154">
    <property type="term" value="C:cleavage furrow"/>
    <property type="evidence" value="ECO:0007669"/>
    <property type="project" value="UniProtKB-SubCell"/>
</dbReference>
<dbReference type="GO" id="GO:0005737">
    <property type="term" value="C:cytoplasm"/>
    <property type="evidence" value="ECO:0000318"/>
    <property type="project" value="GO_Central"/>
</dbReference>
<dbReference type="GO" id="GO:0005856">
    <property type="term" value="C:cytoskeleton"/>
    <property type="evidence" value="ECO:0007669"/>
    <property type="project" value="UniProtKB-SubCell"/>
</dbReference>
<dbReference type="GO" id="GO:0030496">
    <property type="term" value="C:midbody"/>
    <property type="evidence" value="ECO:0007669"/>
    <property type="project" value="UniProtKB-SubCell"/>
</dbReference>
<dbReference type="GO" id="GO:0003779">
    <property type="term" value="F:actin binding"/>
    <property type="evidence" value="ECO:0000318"/>
    <property type="project" value="GO_Central"/>
</dbReference>
<dbReference type="GO" id="GO:0004721">
    <property type="term" value="F:phosphoprotein phosphatase activity"/>
    <property type="evidence" value="ECO:0000318"/>
    <property type="project" value="GO_Central"/>
</dbReference>
<dbReference type="GO" id="GO:0004722">
    <property type="term" value="F:protein serine/threonine phosphatase activity"/>
    <property type="evidence" value="ECO:0007669"/>
    <property type="project" value="UniProtKB-EC"/>
</dbReference>
<dbReference type="GO" id="GO:0004725">
    <property type="term" value="F:protein tyrosine phosphatase activity"/>
    <property type="evidence" value="ECO:0007669"/>
    <property type="project" value="UniProtKB-EC"/>
</dbReference>
<dbReference type="GO" id="GO:0030036">
    <property type="term" value="P:actin cytoskeleton organization"/>
    <property type="evidence" value="ECO:0000318"/>
    <property type="project" value="GO_Central"/>
</dbReference>
<dbReference type="GO" id="GO:0030837">
    <property type="term" value="P:negative regulation of actin filament polymerization"/>
    <property type="evidence" value="ECO:0000318"/>
    <property type="project" value="GO_Central"/>
</dbReference>
<dbReference type="CDD" id="cd14571">
    <property type="entry name" value="DSP_slingshot_3"/>
    <property type="match status" value="1"/>
</dbReference>
<dbReference type="CDD" id="cd11652">
    <property type="entry name" value="SSH-N"/>
    <property type="match status" value="1"/>
</dbReference>
<dbReference type="FunFam" id="3.90.190.10:FF:000004">
    <property type="entry name" value="Protein phosphatase Slingshot homolog 2"/>
    <property type="match status" value="1"/>
</dbReference>
<dbReference type="Gene3D" id="1.10.10.60">
    <property type="entry name" value="Homeodomain-like"/>
    <property type="match status" value="1"/>
</dbReference>
<dbReference type="Gene3D" id="3.90.190.10">
    <property type="entry name" value="Protein tyrosine phosphatase superfamily"/>
    <property type="match status" value="1"/>
</dbReference>
<dbReference type="InterPro" id="IPR014876">
    <property type="entry name" value="DEK_C"/>
</dbReference>
<dbReference type="InterPro" id="IPR000340">
    <property type="entry name" value="Dual-sp_phosphatase_cat-dom"/>
</dbReference>
<dbReference type="InterPro" id="IPR043587">
    <property type="entry name" value="Phosphatase_SSH-like"/>
</dbReference>
<dbReference type="InterPro" id="IPR029021">
    <property type="entry name" value="Prot-tyrosine_phosphatase-like"/>
</dbReference>
<dbReference type="InterPro" id="IPR043588">
    <property type="entry name" value="SSH-N"/>
</dbReference>
<dbReference type="InterPro" id="IPR016130">
    <property type="entry name" value="Tyr_Pase_AS"/>
</dbReference>
<dbReference type="InterPro" id="IPR000387">
    <property type="entry name" value="Tyr_Pase_dom"/>
</dbReference>
<dbReference type="InterPro" id="IPR020422">
    <property type="entry name" value="TYR_PHOSPHATASE_DUAL_dom"/>
</dbReference>
<dbReference type="PANTHER" id="PTHR45864:SF4">
    <property type="entry name" value="PROTEIN PHOSPHATASE SLINGSHOT HOMOLOG 3"/>
    <property type="match status" value="1"/>
</dbReference>
<dbReference type="PANTHER" id="PTHR45864">
    <property type="entry name" value="SLINGSHOT PROTEIN PHOSPHATASE HOMOLOG"/>
    <property type="match status" value="1"/>
</dbReference>
<dbReference type="Pfam" id="PF08766">
    <property type="entry name" value="DEK_C"/>
    <property type="match status" value="1"/>
</dbReference>
<dbReference type="Pfam" id="PF00782">
    <property type="entry name" value="DSPc"/>
    <property type="match status" value="1"/>
</dbReference>
<dbReference type="Pfam" id="PF23040">
    <property type="entry name" value="PH_SSH1-like_1st"/>
    <property type="match status" value="1"/>
</dbReference>
<dbReference type="SMART" id="SM00195">
    <property type="entry name" value="DSPc"/>
    <property type="match status" value="1"/>
</dbReference>
<dbReference type="SUPFAM" id="SSF52799">
    <property type="entry name" value="(Phosphotyrosine protein) phosphatases II"/>
    <property type="match status" value="1"/>
</dbReference>
<dbReference type="SUPFAM" id="SSF109715">
    <property type="entry name" value="DEK C-terminal domain"/>
    <property type="match status" value="1"/>
</dbReference>
<dbReference type="PROSITE" id="PS51998">
    <property type="entry name" value="DEK_C"/>
    <property type="match status" value="1"/>
</dbReference>
<dbReference type="PROSITE" id="PS00383">
    <property type="entry name" value="TYR_PHOSPHATASE_1"/>
    <property type="match status" value="1"/>
</dbReference>
<dbReference type="PROSITE" id="PS50056">
    <property type="entry name" value="TYR_PHOSPHATASE_2"/>
    <property type="match status" value="1"/>
</dbReference>
<dbReference type="PROSITE" id="PS50054">
    <property type="entry name" value="TYR_PHOSPHATASE_DUAL"/>
    <property type="match status" value="1"/>
</dbReference>
<organism>
    <name type="scientific">Xenopus laevis</name>
    <name type="common">African clawed frog</name>
    <dbReference type="NCBI Taxonomy" id="8355"/>
    <lineage>
        <taxon>Eukaryota</taxon>
        <taxon>Metazoa</taxon>
        <taxon>Chordata</taxon>
        <taxon>Craniata</taxon>
        <taxon>Vertebrata</taxon>
        <taxon>Euteleostomi</taxon>
        <taxon>Amphibia</taxon>
        <taxon>Batrachia</taxon>
        <taxon>Anura</taxon>
        <taxon>Pipoidea</taxon>
        <taxon>Pipidae</taxon>
        <taxon>Xenopodinae</taxon>
        <taxon>Xenopus</taxon>
        <taxon>Xenopus</taxon>
    </lineage>
</organism>
<name>SSH_XENLA</name>
<proteinExistence type="evidence at protein level"/>
<reference key="1">
    <citation type="journal article" date="2005" name="Zool. Sci.">
        <title>Functional involvement of Xenopus homologue of ADF/cofilin phosphatase, Slingshot (XSSH), in the gastrulation movement.</title>
        <authorList>
            <person name="Tanaka K."/>
            <person name="Nishio R."/>
            <person name="Haneda K."/>
            <person name="Abe H."/>
        </authorList>
    </citation>
    <scope>NUCLEOTIDE SEQUENCE [MRNA] (ISOFORMS 1 AND 2)</scope>
    <scope>FUNCTION</scope>
    <scope>DEVELOPMENTAL STAGE</scope>
    <scope>MUTAGENESIS OF CYS-380</scope>
</reference>
<reference key="2">
    <citation type="submission" date="2007-03" db="EMBL/GenBank/DDBJ databases">
        <authorList>
            <consortium name="NIH - Xenopus Gene Collection (XGC) project"/>
        </authorList>
    </citation>
    <scope>NUCLEOTIDE SEQUENCE [LARGE SCALE MRNA] (ISOFORM 1)</scope>
    <source>
        <tissue>Eye</tissue>
        <tissue>Oocyte</tissue>
    </source>
</reference>
<reference key="3">
    <citation type="journal article" date="2005" name="Zool. Sci.">
        <title>Involvement of slingshot in the Rho-mediated dephosphorylation of ADF/cofilin during Xenopus cleavage.</title>
        <authorList>
            <person name="Tanaka K."/>
            <person name="Okubo Y."/>
            <person name="Abe H."/>
        </authorList>
    </citation>
    <scope>FUNCTION</scope>
    <scope>INTERACTION WITH ACTIN</scope>
    <scope>SUBCELLULAR LOCATION</scope>
</reference>
<sequence>MALVTLQVSSLDVGSNITPVQDDEKSRRKRMQRRQSFVMVKGAALLLQDEGEPIDTREPLSSSGPNEQQIHLQSMLRLLREEDTLTLAVRLEPVRSCLTRYLLVVSSTGKSNVEETLLLGVDFPHDGSLCCTIGTVLPIWSNTQVFLDGDGGFTVTSGMDIRTFKPISVQTMWSLLQMLHKACESALSNNVISSSLYSGLIYYQSNRSSPQVCLNAWTASPDIESARRDPATPEREETERIIKLKLRDILRESDLENITSKEVRSALEQHTLCALQDYKEFIDNEMIIILAQMDRPSEIFPYLYLGSEWNASNLEELQKNKVSHILNVTREIDNFFPELFMYLNIRVLDEENTNLMQYWKETHAFITTARHQGSRVLVHCKMGVSRSASTVIAYAMKEYEWTLETAIRHVKERRSIVQPNAGFMRQLQTYQGILGASKQRHSYLWDPSSAPSLPLMSPPPKNFSSPTTSPLTPRLQKMNLRTLMRSISEMEAADTISEEKESTVVLEETTLKQNFNVLESSSNNLQVTPKRNEHVLSKEQIIQEEKKVMELEKGPEWVVKNNVLEEMKETEERELPNFELPMSLNQSRERDQETIKESSVITQGSSSLDEVFESSTPTRSPEMASYACQKIQYFEQHSEGYSKVCFVDNLQSVSEEEKVTLVSKQLQTDEHGERKARITRQQNVIDTHEEL</sequence>
<gene>
    <name type="primary">ssh</name>
</gene>
<feature type="chain" id="PRO_0000094848" description="Protein phosphatase Slingshot homolog">
    <location>
        <begin position="1"/>
        <end position="691"/>
    </location>
</feature>
<feature type="domain" description="DEK-C" evidence="3">
    <location>
        <begin position="236"/>
        <end position="291"/>
    </location>
</feature>
<feature type="domain" description="Tyrosine-protein phosphatase" evidence="2">
    <location>
        <begin position="295"/>
        <end position="436"/>
    </location>
</feature>
<feature type="region of interest" description="Disordered" evidence="5">
    <location>
        <begin position="585"/>
        <end position="620"/>
    </location>
</feature>
<feature type="coiled-coil region" evidence="1">
    <location>
        <begin position="532"/>
        <end position="580"/>
    </location>
</feature>
<feature type="compositionally biased region" description="Basic and acidic residues" evidence="5">
    <location>
        <begin position="587"/>
        <end position="596"/>
    </location>
</feature>
<feature type="compositionally biased region" description="Polar residues" evidence="5">
    <location>
        <begin position="597"/>
        <end position="619"/>
    </location>
</feature>
<feature type="active site" description="Phosphocysteine intermediate" evidence="2">
    <location>
        <position position="380"/>
    </location>
</feature>
<feature type="splice variant" id="VSP_016338" description="In isoform 2." evidence="8">
    <location>
        <begin position="1"/>
        <end position="38"/>
    </location>
</feature>
<feature type="mutagenesis site" description="Abrogates phosphatase activity." evidence="6">
    <original>C</original>
    <variation>S</variation>
    <location>
        <position position="380"/>
    </location>
</feature>
<feature type="sequence conflict" description="In Ref. 1; AAT39429." evidence="9" ref="1">
    <original>P</original>
    <variation>R</variation>
    <location>
        <position position="65"/>
    </location>
</feature>
<feature type="sequence conflict" description="In Ref. 2; AAH80117." evidence="9" ref="2">
    <original>A</original>
    <variation>V</variation>
    <location>
        <position position="624"/>
    </location>
</feature>
<feature type="sequence conflict" description="In Ref. 2; AAH80117." evidence="9" ref="2">
    <original>A</original>
    <variation>K</variation>
    <location>
        <position position="627"/>
    </location>
</feature>
<comment type="function">
    <text evidence="6 7">Protein phosphatase which regulates actin filament dynamics. Dephosphorylates and activates the actin binding/depolymerizing factor cofilin, which subsequently binds to actin filaments and stimulates their disassembly. Required for completion of the gastrulation movement and for cytokinesis.</text>
</comment>
<comment type="catalytic activity">
    <reaction evidence="4">
        <text>O-phospho-L-tyrosyl-[protein] + H2O = L-tyrosyl-[protein] + phosphate</text>
        <dbReference type="Rhea" id="RHEA:10684"/>
        <dbReference type="Rhea" id="RHEA-COMP:10136"/>
        <dbReference type="Rhea" id="RHEA-COMP:20101"/>
        <dbReference type="ChEBI" id="CHEBI:15377"/>
        <dbReference type="ChEBI" id="CHEBI:43474"/>
        <dbReference type="ChEBI" id="CHEBI:46858"/>
        <dbReference type="ChEBI" id="CHEBI:61978"/>
        <dbReference type="EC" id="3.1.3.48"/>
    </reaction>
</comment>
<comment type="catalytic activity">
    <reaction>
        <text>O-phospho-L-seryl-[protein] + H2O = L-seryl-[protein] + phosphate</text>
        <dbReference type="Rhea" id="RHEA:20629"/>
        <dbReference type="Rhea" id="RHEA-COMP:9863"/>
        <dbReference type="Rhea" id="RHEA-COMP:11604"/>
        <dbReference type="ChEBI" id="CHEBI:15377"/>
        <dbReference type="ChEBI" id="CHEBI:29999"/>
        <dbReference type="ChEBI" id="CHEBI:43474"/>
        <dbReference type="ChEBI" id="CHEBI:83421"/>
        <dbReference type="EC" id="3.1.3.16"/>
    </reaction>
</comment>
<comment type="catalytic activity">
    <reaction>
        <text>O-phospho-L-threonyl-[protein] + H2O = L-threonyl-[protein] + phosphate</text>
        <dbReference type="Rhea" id="RHEA:47004"/>
        <dbReference type="Rhea" id="RHEA-COMP:11060"/>
        <dbReference type="Rhea" id="RHEA-COMP:11605"/>
        <dbReference type="ChEBI" id="CHEBI:15377"/>
        <dbReference type="ChEBI" id="CHEBI:30013"/>
        <dbReference type="ChEBI" id="CHEBI:43474"/>
        <dbReference type="ChEBI" id="CHEBI:61977"/>
        <dbReference type="EC" id="3.1.3.16"/>
    </reaction>
</comment>
<comment type="subunit">
    <text evidence="7">Interacts with actin and this stimulates phosphatase activity.</text>
</comment>
<comment type="subcellular location">
    <subcellularLocation>
        <location evidence="7">Cytoplasm</location>
        <location evidence="7">Cytoskeleton</location>
    </subcellularLocation>
    <subcellularLocation>
        <location evidence="7">Cleavage furrow</location>
    </subcellularLocation>
    <subcellularLocation>
        <location evidence="7">Midbody</location>
    </subcellularLocation>
    <text>Also localizes to the cleavage furrow and the midbody during cytokinesis.</text>
</comment>
<comment type="alternative products">
    <event type="alternative splicing"/>
    <isoform>
        <id>Q6IVY4-1</id>
        <name>1</name>
        <sequence type="displayed"/>
    </isoform>
    <isoform>
        <id>Q6IVY4-2</id>
        <name>2</name>
        <sequence type="described" ref="VSP_016338"/>
    </isoform>
</comment>
<comment type="developmental stage">
    <text evidence="6">Maternally expressed in the early blastomere. Expressed in the involuting mesodermal cells and ectodermal cells of early gastrula stage embryos. Expression increases from stage 10.5, when the gastrulation movement occurs. Expression is concentrated at blastopore lips and the dorsal site of stage 11 embryos. Present in head structures and the trunk at the neurula and tailbud stages.</text>
</comment>
<comment type="miscellaneous">
    <text>Tyrosine phosphatase activity has not been demonstrated for this protein to date.</text>
</comment>
<comment type="similarity">
    <text evidence="9">Belongs to the protein-tyrosine phosphatase family.</text>
</comment>
<accession>Q6IVY4</accession>
<accession>Q505N4</accession>
<accession>Q68ET3</accession>
<accession>Q7T2T3</accession>
<keyword id="KW-0009">Actin-binding</keyword>
<keyword id="KW-0025">Alternative splicing</keyword>
<keyword id="KW-0175">Coiled coil</keyword>
<keyword id="KW-0963">Cytoplasm</keyword>
<keyword id="KW-0206">Cytoskeleton</keyword>
<keyword id="KW-0378">Hydrolase</keyword>
<keyword id="KW-0904">Protein phosphatase</keyword>
<keyword id="KW-1185">Reference proteome</keyword>
<protein>
    <recommendedName>
        <fullName>Protein phosphatase Slingshot homolog</fullName>
        <shortName>xSSH</shortName>
        <ecNumber>3.1.3.16</ecNumber>
        <ecNumber>3.1.3.48</ecNumber>
    </recommendedName>
    <alternativeName>
        <fullName>Slingshot-related protein</fullName>
    </alternativeName>
</protein>
<evidence type="ECO:0000255" key="1"/>
<evidence type="ECO:0000255" key="2">
    <source>
        <dbReference type="PROSITE-ProRule" id="PRU00160"/>
    </source>
</evidence>
<evidence type="ECO:0000255" key="3">
    <source>
        <dbReference type="PROSITE-ProRule" id="PRU01342"/>
    </source>
</evidence>
<evidence type="ECO:0000255" key="4">
    <source>
        <dbReference type="PROSITE-ProRule" id="PRU10044"/>
    </source>
</evidence>
<evidence type="ECO:0000256" key="5">
    <source>
        <dbReference type="SAM" id="MobiDB-lite"/>
    </source>
</evidence>
<evidence type="ECO:0000269" key="6">
    <source>
    </source>
</evidence>
<evidence type="ECO:0000269" key="7">
    <source>
    </source>
</evidence>
<evidence type="ECO:0000303" key="8">
    <source>
    </source>
</evidence>
<evidence type="ECO:0000305" key="9"/>